<comment type="subunit">
    <text>Part of the 30S ribosomal subunit.</text>
</comment>
<comment type="subcellular location">
    <subcellularLocation>
        <location>Plastid</location>
        <location>Chloroplast</location>
    </subcellularLocation>
</comment>
<comment type="similarity">
    <text evidence="1">Belongs to the bacterial ribosomal protein bS18 family.</text>
</comment>
<organism>
    <name type="scientific">Solanum tuberosum</name>
    <name type="common">Potato</name>
    <dbReference type="NCBI Taxonomy" id="4113"/>
    <lineage>
        <taxon>Eukaryota</taxon>
        <taxon>Viridiplantae</taxon>
        <taxon>Streptophyta</taxon>
        <taxon>Embryophyta</taxon>
        <taxon>Tracheophyta</taxon>
        <taxon>Spermatophyta</taxon>
        <taxon>Magnoliopsida</taxon>
        <taxon>eudicotyledons</taxon>
        <taxon>Gunneridae</taxon>
        <taxon>Pentapetalae</taxon>
        <taxon>asterids</taxon>
        <taxon>lamiids</taxon>
        <taxon>Solanales</taxon>
        <taxon>Solanaceae</taxon>
        <taxon>Solanoideae</taxon>
        <taxon>Solaneae</taxon>
        <taxon>Solanum</taxon>
    </lineage>
</organism>
<keyword id="KW-0150">Chloroplast</keyword>
<keyword id="KW-0934">Plastid</keyword>
<keyword id="KW-1185">Reference proteome</keyword>
<keyword id="KW-0687">Ribonucleoprotein</keyword>
<keyword id="KW-0689">Ribosomal protein</keyword>
<keyword id="KW-0694">RNA-binding</keyword>
<keyword id="KW-0699">rRNA-binding</keyword>
<evidence type="ECO:0000255" key="1">
    <source>
        <dbReference type="HAMAP-Rule" id="MF_00270"/>
    </source>
</evidence>
<evidence type="ECO:0000305" key="2"/>
<gene>
    <name evidence="1" type="primary">rps18</name>
</gene>
<proteinExistence type="inferred from homology"/>
<geneLocation type="chloroplast"/>
<sequence>MDKSKRPFLKFKRSFRRRLPPIQSGDRIDYRNMSLISRFISEQGKILSRRVNRLTLKQQRLITLAIKQARILSLLPFLNNEKQFERTESTARTTGFKARNK</sequence>
<name>RR18_SOLTU</name>
<reference key="1">
    <citation type="journal article" date="2006" name="Plant Cell Rep.">
        <title>The complete chloroplast genome sequences of Solanum tuberosum and comparative analysis with Solanaceae species identified the presence of a 241-bp deletion in cultivated potato chloroplast DNA sequence.</title>
        <authorList>
            <person name="Chung H.-J."/>
            <person name="Jung J.D."/>
            <person name="Park H.-W."/>
            <person name="Kim J.-H."/>
            <person name="Cha H.W."/>
            <person name="Min S.R."/>
            <person name="Jeong W.-J."/>
            <person name="Liu J.R."/>
        </authorList>
    </citation>
    <scope>NUCLEOTIDE SEQUENCE [LARGE SCALE GENOMIC DNA]</scope>
    <source>
        <strain>cv. Desiree</strain>
    </source>
</reference>
<reference key="2">
    <citation type="submission" date="2006-02" db="EMBL/GenBank/DDBJ databases">
        <title>Complete chloroplast genome sequences of Solanum tuberosum cultivar Desiree and comparative analyses with other Solanaceae genomes.</title>
        <authorList>
            <person name="Gargano D."/>
            <person name="Scotti N."/>
            <person name="Vezzi A."/>
            <person name="Bilardi A."/>
            <person name="Valle G."/>
            <person name="Grillo S."/>
            <person name="Cardi T."/>
        </authorList>
    </citation>
    <scope>NUCLEOTIDE SEQUENCE [LARGE SCALE GENOMIC DNA]</scope>
    <source>
        <strain>cv. Desiree</strain>
    </source>
</reference>
<feature type="chain" id="PRO_0000276889" description="Small ribosomal subunit protein bS18c">
    <location>
        <begin position="1"/>
        <end position="101"/>
    </location>
</feature>
<protein>
    <recommendedName>
        <fullName evidence="1">Small ribosomal subunit protein bS18c</fullName>
    </recommendedName>
    <alternativeName>
        <fullName evidence="2">30S ribosomal protein S18, chloroplastic</fullName>
    </alternativeName>
</protein>
<accession>Q2VEF6</accession>
<dbReference type="EMBL" id="DQ231562">
    <property type="protein sequence ID" value="ABB90062.1"/>
    <property type="molecule type" value="Genomic_DNA"/>
</dbReference>
<dbReference type="EMBL" id="DQ386163">
    <property type="protein sequence ID" value="ABD47079.1"/>
    <property type="molecule type" value="Genomic_DNA"/>
</dbReference>
<dbReference type="RefSeq" id="YP_635661.1">
    <property type="nucleotide sequence ID" value="NC_008096.2"/>
</dbReference>
<dbReference type="SMR" id="Q2VEF6"/>
<dbReference type="FunCoup" id="Q2VEF6">
    <property type="interactions" value="1046"/>
</dbReference>
<dbReference type="STRING" id="4113.Q2VEF6"/>
<dbReference type="PaxDb" id="4113-PGSC0003DMT400058248"/>
<dbReference type="EnsemblPlants" id="PGSC0003DMT400058248">
    <property type="protein sequence ID" value="PGSC0003DMT400058248"/>
    <property type="gene ID" value="PGSC0003DMG401022617"/>
</dbReference>
<dbReference type="EnsemblPlants" id="PGSC0003DMT400095246">
    <property type="protein sequence ID" value="PGSC0003DMT400095246"/>
    <property type="gene ID" value="PGSC0003DMG400044817"/>
</dbReference>
<dbReference type="EnsemblPlants" id="PGSC0003DMT400095883">
    <property type="protein sequence ID" value="PGSC0003DMT400095883"/>
    <property type="gene ID" value="PGSC0003DMG400045454"/>
</dbReference>
<dbReference type="GeneID" id="4099868"/>
<dbReference type="Gramene" id="PGSC0003DMT400058248">
    <property type="protein sequence ID" value="PGSC0003DMT400058248"/>
    <property type="gene ID" value="PGSC0003DMG401022617"/>
</dbReference>
<dbReference type="Gramene" id="PGSC0003DMT400095246">
    <property type="protein sequence ID" value="PGSC0003DMT400095246"/>
    <property type="gene ID" value="PGSC0003DMG400044817"/>
</dbReference>
<dbReference type="Gramene" id="PGSC0003DMT400095883">
    <property type="protein sequence ID" value="PGSC0003DMT400095883"/>
    <property type="gene ID" value="PGSC0003DMG400045454"/>
</dbReference>
<dbReference type="KEGG" id="sot:4099868"/>
<dbReference type="eggNOG" id="KOG3162">
    <property type="taxonomic scope" value="Eukaryota"/>
</dbReference>
<dbReference type="HOGENOM" id="CLU_2296586_0_0_1"/>
<dbReference type="InParanoid" id="Q2VEF6"/>
<dbReference type="OMA" id="QRTSPIN"/>
<dbReference type="OrthoDB" id="21463at2759"/>
<dbReference type="Proteomes" id="UP000011115">
    <property type="component" value="Unassembled WGS sequence"/>
</dbReference>
<dbReference type="GO" id="GO:0009507">
    <property type="term" value="C:chloroplast"/>
    <property type="evidence" value="ECO:0007669"/>
    <property type="project" value="UniProtKB-SubCell"/>
</dbReference>
<dbReference type="GO" id="GO:0005763">
    <property type="term" value="C:mitochondrial small ribosomal subunit"/>
    <property type="evidence" value="ECO:0000318"/>
    <property type="project" value="GO_Central"/>
</dbReference>
<dbReference type="GO" id="GO:0070181">
    <property type="term" value="F:small ribosomal subunit rRNA binding"/>
    <property type="evidence" value="ECO:0000318"/>
    <property type="project" value="GO_Central"/>
</dbReference>
<dbReference type="GO" id="GO:0003735">
    <property type="term" value="F:structural constituent of ribosome"/>
    <property type="evidence" value="ECO:0000318"/>
    <property type="project" value="GO_Central"/>
</dbReference>
<dbReference type="GO" id="GO:0006412">
    <property type="term" value="P:translation"/>
    <property type="evidence" value="ECO:0000318"/>
    <property type="project" value="GO_Central"/>
</dbReference>
<dbReference type="FunFam" id="4.10.640.10:FF:000002">
    <property type="entry name" value="30S ribosomal protein S18, chloroplastic"/>
    <property type="match status" value="1"/>
</dbReference>
<dbReference type="Gene3D" id="4.10.640.10">
    <property type="entry name" value="Ribosomal protein S18"/>
    <property type="match status" value="1"/>
</dbReference>
<dbReference type="HAMAP" id="MF_00270">
    <property type="entry name" value="Ribosomal_bS18"/>
    <property type="match status" value="1"/>
</dbReference>
<dbReference type="InterPro" id="IPR001648">
    <property type="entry name" value="Ribosomal_bS18"/>
</dbReference>
<dbReference type="InterPro" id="IPR018275">
    <property type="entry name" value="Ribosomal_bS18_CS"/>
</dbReference>
<dbReference type="InterPro" id="IPR036870">
    <property type="entry name" value="Ribosomal_bS18_sf"/>
</dbReference>
<dbReference type="NCBIfam" id="TIGR00165">
    <property type="entry name" value="S18"/>
    <property type="match status" value="1"/>
</dbReference>
<dbReference type="PANTHER" id="PTHR13479">
    <property type="entry name" value="30S RIBOSOMAL PROTEIN S18"/>
    <property type="match status" value="1"/>
</dbReference>
<dbReference type="PANTHER" id="PTHR13479:SF40">
    <property type="entry name" value="SMALL RIBOSOMAL SUBUNIT PROTEIN BS18M"/>
    <property type="match status" value="1"/>
</dbReference>
<dbReference type="Pfam" id="PF01084">
    <property type="entry name" value="Ribosomal_S18"/>
    <property type="match status" value="1"/>
</dbReference>
<dbReference type="PRINTS" id="PR00974">
    <property type="entry name" value="RIBOSOMALS18"/>
</dbReference>
<dbReference type="SUPFAM" id="SSF46911">
    <property type="entry name" value="Ribosomal protein S18"/>
    <property type="match status" value="1"/>
</dbReference>
<dbReference type="PROSITE" id="PS00057">
    <property type="entry name" value="RIBOSOMAL_S18"/>
    <property type="match status" value="1"/>
</dbReference>